<proteinExistence type="inferred from homology"/>
<sequence length="358" mass="40733">MFDQLDIVEERYEQLNEMLSDPDVVNNPDNLRKYSKEQAELQKTVDVYRDYKQTKEDISEVEEMLRDTKDNDEIEMLKEEHQTLQNKVPKLEEELKFLLIPKDPNDDKDVIVEIRAAAGGDEAAIFAGDLFRMYSKYAETLNYKTDIVEVTESDHGGYKEISFSVSGNGAFSKLKYENGAHRVQRVPETESGGRIHTSTATVAVLPEVEDVEIEVRNEDLKIDTYRSSGAGGQHVNTTDSAVRITHIPTGVIATSSEKSQIQNREKALKVLKARLFDMKLQEEQQKYAAQRKSAVGTGDRSERIRTYNYPQSRVTDHRIGLTLQKLDQIMEGKLDEIIDALTLAEQTDKLKELNNGEL</sequence>
<feature type="chain" id="PRO_0000263362" description="Peptide chain release factor 1">
    <location>
        <begin position="1"/>
        <end position="358"/>
    </location>
</feature>
<feature type="modified residue" description="N5-methylglutamine" evidence="1">
    <location>
        <position position="233"/>
    </location>
</feature>
<organism>
    <name type="scientific">Staphylococcus saprophyticus subsp. saprophyticus (strain ATCC 15305 / DSM 20229 / NCIMB 8711 / NCTC 7292 / S-41)</name>
    <dbReference type="NCBI Taxonomy" id="342451"/>
    <lineage>
        <taxon>Bacteria</taxon>
        <taxon>Bacillati</taxon>
        <taxon>Bacillota</taxon>
        <taxon>Bacilli</taxon>
        <taxon>Bacillales</taxon>
        <taxon>Staphylococcaceae</taxon>
        <taxon>Staphylococcus</taxon>
    </lineage>
</organism>
<keyword id="KW-0963">Cytoplasm</keyword>
<keyword id="KW-0488">Methylation</keyword>
<keyword id="KW-0648">Protein biosynthesis</keyword>
<keyword id="KW-1185">Reference proteome</keyword>
<dbReference type="EMBL" id="AP008934">
    <property type="protein sequence ID" value="BAE17911.1"/>
    <property type="molecule type" value="Genomic_DNA"/>
</dbReference>
<dbReference type="RefSeq" id="WP_002482713.1">
    <property type="nucleotide sequence ID" value="NZ_MTGA01000032.1"/>
</dbReference>
<dbReference type="SMR" id="Q49Z65"/>
<dbReference type="GeneID" id="66866922"/>
<dbReference type="KEGG" id="ssp:SSP0766"/>
<dbReference type="eggNOG" id="COG0216">
    <property type="taxonomic scope" value="Bacteria"/>
</dbReference>
<dbReference type="HOGENOM" id="CLU_036856_0_1_9"/>
<dbReference type="OrthoDB" id="9806673at2"/>
<dbReference type="Proteomes" id="UP000006371">
    <property type="component" value="Chromosome"/>
</dbReference>
<dbReference type="GO" id="GO:0005737">
    <property type="term" value="C:cytoplasm"/>
    <property type="evidence" value="ECO:0007669"/>
    <property type="project" value="UniProtKB-SubCell"/>
</dbReference>
<dbReference type="GO" id="GO:0016149">
    <property type="term" value="F:translation release factor activity, codon specific"/>
    <property type="evidence" value="ECO:0007669"/>
    <property type="project" value="UniProtKB-UniRule"/>
</dbReference>
<dbReference type="FunFam" id="3.30.160.20:FF:000004">
    <property type="entry name" value="Peptide chain release factor 1"/>
    <property type="match status" value="1"/>
</dbReference>
<dbReference type="FunFam" id="3.30.70.1660:FF:000002">
    <property type="entry name" value="Peptide chain release factor 1"/>
    <property type="match status" value="1"/>
</dbReference>
<dbReference type="FunFam" id="3.30.70.1660:FF:000004">
    <property type="entry name" value="Peptide chain release factor 1"/>
    <property type="match status" value="1"/>
</dbReference>
<dbReference type="Gene3D" id="3.30.160.20">
    <property type="match status" value="1"/>
</dbReference>
<dbReference type="Gene3D" id="3.30.70.1660">
    <property type="match status" value="1"/>
</dbReference>
<dbReference type="Gene3D" id="6.10.140.1950">
    <property type="match status" value="1"/>
</dbReference>
<dbReference type="HAMAP" id="MF_00093">
    <property type="entry name" value="Rel_fac_1"/>
    <property type="match status" value="1"/>
</dbReference>
<dbReference type="InterPro" id="IPR005139">
    <property type="entry name" value="PCRF"/>
</dbReference>
<dbReference type="InterPro" id="IPR000352">
    <property type="entry name" value="Pep_chain_release_fac_I"/>
</dbReference>
<dbReference type="InterPro" id="IPR045853">
    <property type="entry name" value="Pep_chain_release_fac_I_sf"/>
</dbReference>
<dbReference type="InterPro" id="IPR050057">
    <property type="entry name" value="Prokaryotic/Mito_RF"/>
</dbReference>
<dbReference type="InterPro" id="IPR004373">
    <property type="entry name" value="RF-1"/>
</dbReference>
<dbReference type="NCBIfam" id="TIGR00019">
    <property type="entry name" value="prfA"/>
    <property type="match status" value="1"/>
</dbReference>
<dbReference type="NCBIfam" id="NF001859">
    <property type="entry name" value="PRK00591.1"/>
    <property type="match status" value="1"/>
</dbReference>
<dbReference type="PANTHER" id="PTHR43804">
    <property type="entry name" value="LD18447P"/>
    <property type="match status" value="1"/>
</dbReference>
<dbReference type="PANTHER" id="PTHR43804:SF7">
    <property type="entry name" value="LD18447P"/>
    <property type="match status" value="1"/>
</dbReference>
<dbReference type="Pfam" id="PF03462">
    <property type="entry name" value="PCRF"/>
    <property type="match status" value="1"/>
</dbReference>
<dbReference type="Pfam" id="PF00472">
    <property type="entry name" value="RF-1"/>
    <property type="match status" value="1"/>
</dbReference>
<dbReference type="SMART" id="SM00937">
    <property type="entry name" value="PCRF"/>
    <property type="match status" value="1"/>
</dbReference>
<dbReference type="SUPFAM" id="SSF75620">
    <property type="entry name" value="Release factor"/>
    <property type="match status" value="1"/>
</dbReference>
<dbReference type="PROSITE" id="PS00745">
    <property type="entry name" value="RF_PROK_I"/>
    <property type="match status" value="1"/>
</dbReference>
<reference key="1">
    <citation type="journal article" date="2005" name="Proc. Natl. Acad. Sci. U.S.A.">
        <title>Whole genome sequence of Staphylococcus saprophyticus reveals the pathogenesis of uncomplicated urinary tract infection.</title>
        <authorList>
            <person name="Kuroda M."/>
            <person name="Yamashita A."/>
            <person name="Hirakawa H."/>
            <person name="Kumano M."/>
            <person name="Morikawa K."/>
            <person name="Higashide M."/>
            <person name="Maruyama A."/>
            <person name="Inose Y."/>
            <person name="Matoba K."/>
            <person name="Toh H."/>
            <person name="Kuhara S."/>
            <person name="Hattori M."/>
            <person name="Ohta T."/>
        </authorList>
    </citation>
    <scope>NUCLEOTIDE SEQUENCE [LARGE SCALE GENOMIC DNA]</scope>
    <source>
        <strain>ATCC 15305 / DSM 20229 / NCIMB 8711 / NCTC 7292 / S-41</strain>
    </source>
</reference>
<name>RF1_STAS1</name>
<accession>Q49Z65</accession>
<protein>
    <recommendedName>
        <fullName evidence="1">Peptide chain release factor 1</fullName>
        <shortName evidence="1">RF-1</shortName>
    </recommendedName>
</protein>
<gene>
    <name evidence="1" type="primary">prfA</name>
    <name type="ordered locus">SSP0766</name>
</gene>
<evidence type="ECO:0000255" key="1">
    <source>
        <dbReference type="HAMAP-Rule" id="MF_00093"/>
    </source>
</evidence>
<comment type="function">
    <text evidence="1">Peptide chain release factor 1 directs the termination of translation in response to the peptide chain termination codons UAG and UAA.</text>
</comment>
<comment type="subcellular location">
    <subcellularLocation>
        <location evidence="1">Cytoplasm</location>
    </subcellularLocation>
</comment>
<comment type="PTM">
    <text evidence="1">Methylated by PrmC. Methylation increases the termination efficiency of RF1.</text>
</comment>
<comment type="similarity">
    <text evidence="1">Belongs to the prokaryotic/mitochondrial release factor family.</text>
</comment>